<protein>
    <recommendedName>
        <fullName evidence="2">Elongation factor 1-alpha</fullName>
        <shortName evidence="2">EF-1-alpha</shortName>
        <ecNumber evidence="2">3.6.5.3</ecNumber>
    </recommendedName>
    <alternativeName>
        <fullName evidence="2">Elongation factor Tu</fullName>
        <shortName evidence="2">EF-Tu</shortName>
    </alternativeName>
</protein>
<gene>
    <name evidence="2" type="primary">tuf</name>
    <name type="ordered locus">Pars_1362</name>
</gene>
<sequence length="444" mass="48886">MPSIILPPKPTALQKPHINLAVVGHVDNGKSTLVGRLLYETGYVDEKGFKEIEEMAKKMGKEDFAFAWILDRFKEERERGVTIEATHVGFETNKLFITIIDLPGHRDFVKNMIVGASQADAALFVISARPGEFETAIGPQGQGREHLFLIRTLGIQQLVVAVNKMDVVNYDQKRYEQVKSEVSKLLKLLGYDPSKIHFVPVSAVKGDNVRTKSSNTPWYNGPTLLEVLDTFQPPPRPTDKPLRLPIQDVFSITGAGTVVVGRVETGVLKAGDRVVVVPPAKVGDVRSIETHHMKLEQAQPGDNVGVNVRGINKEDVKRGDVLGKVDNIPTVTEEIIARIVVLWHPTAIGPGYAPVMHIHTATVPVQITELISKLDPRTGQAVEQKPQFIKQGDVAIVKIKPLKPVVAEKFSDFPPLGRFALRDMGRTIAAGQILEVKPAQVQIK</sequence>
<keyword id="KW-0963">Cytoplasm</keyword>
<keyword id="KW-0251">Elongation factor</keyword>
<keyword id="KW-0342">GTP-binding</keyword>
<keyword id="KW-0378">Hydrolase</keyword>
<keyword id="KW-0460">Magnesium</keyword>
<keyword id="KW-0479">Metal-binding</keyword>
<keyword id="KW-0547">Nucleotide-binding</keyword>
<keyword id="KW-0648">Protein biosynthesis</keyword>
<dbReference type="EC" id="3.6.5.3" evidence="2"/>
<dbReference type="EMBL" id="CP000660">
    <property type="protein sequence ID" value="ABP50925.1"/>
    <property type="molecule type" value="Genomic_DNA"/>
</dbReference>
<dbReference type="RefSeq" id="WP_011900832.1">
    <property type="nucleotide sequence ID" value="NC_009376.1"/>
</dbReference>
<dbReference type="SMR" id="A4WKK8"/>
<dbReference type="STRING" id="340102.Pars_1362"/>
<dbReference type="GeneID" id="5054108"/>
<dbReference type="KEGG" id="pas:Pars_1362"/>
<dbReference type="HOGENOM" id="CLU_007265_3_5_2"/>
<dbReference type="OrthoDB" id="371718at2157"/>
<dbReference type="PhylomeDB" id="A4WKK8"/>
<dbReference type="Proteomes" id="UP000001567">
    <property type="component" value="Chromosome"/>
</dbReference>
<dbReference type="GO" id="GO:0005737">
    <property type="term" value="C:cytoplasm"/>
    <property type="evidence" value="ECO:0007669"/>
    <property type="project" value="UniProtKB-SubCell"/>
</dbReference>
<dbReference type="GO" id="GO:0005525">
    <property type="term" value="F:GTP binding"/>
    <property type="evidence" value="ECO:0007669"/>
    <property type="project" value="UniProtKB-UniRule"/>
</dbReference>
<dbReference type="GO" id="GO:0003924">
    <property type="term" value="F:GTPase activity"/>
    <property type="evidence" value="ECO:0007669"/>
    <property type="project" value="InterPro"/>
</dbReference>
<dbReference type="GO" id="GO:0003746">
    <property type="term" value="F:translation elongation factor activity"/>
    <property type="evidence" value="ECO:0007669"/>
    <property type="project" value="UniProtKB-UniRule"/>
</dbReference>
<dbReference type="CDD" id="cd01883">
    <property type="entry name" value="EF1_alpha"/>
    <property type="match status" value="1"/>
</dbReference>
<dbReference type="CDD" id="cd03693">
    <property type="entry name" value="EF1_alpha_II"/>
    <property type="match status" value="1"/>
</dbReference>
<dbReference type="CDD" id="cd03705">
    <property type="entry name" value="EF1_alpha_III"/>
    <property type="match status" value="1"/>
</dbReference>
<dbReference type="FunFam" id="2.40.30.10:FF:000005">
    <property type="entry name" value="Elongation factor 1-alpha"/>
    <property type="match status" value="1"/>
</dbReference>
<dbReference type="FunFam" id="2.40.30.10:FF:000020">
    <property type="entry name" value="Translation elongation factor EF-1"/>
    <property type="match status" value="1"/>
</dbReference>
<dbReference type="FunFam" id="3.40.50.300:FF:000204">
    <property type="entry name" value="Translation elongation factor Tu"/>
    <property type="match status" value="1"/>
</dbReference>
<dbReference type="Gene3D" id="3.40.50.300">
    <property type="entry name" value="P-loop containing nucleotide triphosphate hydrolases"/>
    <property type="match status" value="1"/>
</dbReference>
<dbReference type="Gene3D" id="2.40.30.10">
    <property type="entry name" value="Translation factors"/>
    <property type="match status" value="2"/>
</dbReference>
<dbReference type="HAMAP" id="MF_00118_A">
    <property type="entry name" value="EF_Tu_A"/>
    <property type="match status" value="1"/>
</dbReference>
<dbReference type="InterPro" id="IPR004161">
    <property type="entry name" value="EFTu-like_2"/>
</dbReference>
<dbReference type="InterPro" id="IPR029459">
    <property type="entry name" value="EFTU-type"/>
</dbReference>
<dbReference type="InterPro" id="IPR031157">
    <property type="entry name" value="G_TR_CS"/>
</dbReference>
<dbReference type="InterPro" id="IPR054696">
    <property type="entry name" value="GTP-eEF1A_C"/>
</dbReference>
<dbReference type="InterPro" id="IPR027417">
    <property type="entry name" value="P-loop_NTPase"/>
</dbReference>
<dbReference type="InterPro" id="IPR000795">
    <property type="entry name" value="T_Tr_GTP-bd_dom"/>
</dbReference>
<dbReference type="InterPro" id="IPR050100">
    <property type="entry name" value="TRAFAC_GTPase_members"/>
</dbReference>
<dbReference type="InterPro" id="IPR009000">
    <property type="entry name" value="Transl_B-barrel_sf"/>
</dbReference>
<dbReference type="InterPro" id="IPR009001">
    <property type="entry name" value="Transl_elong_EF1A/Init_IF2_C"/>
</dbReference>
<dbReference type="InterPro" id="IPR004539">
    <property type="entry name" value="Transl_elong_EF1A_euk/arc"/>
</dbReference>
<dbReference type="NCBIfam" id="TIGR00483">
    <property type="entry name" value="EF-1_alpha"/>
    <property type="match status" value="1"/>
</dbReference>
<dbReference type="NCBIfam" id="NF008969">
    <property type="entry name" value="PRK12317.1"/>
    <property type="match status" value="1"/>
</dbReference>
<dbReference type="PANTHER" id="PTHR23115">
    <property type="entry name" value="TRANSLATION FACTOR"/>
    <property type="match status" value="1"/>
</dbReference>
<dbReference type="Pfam" id="PF22594">
    <property type="entry name" value="GTP-eEF1A_C"/>
    <property type="match status" value="1"/>
</dbReference>
<dbReference type="Pfam" id="PF00009">
    <property type="entry name" value="GTP_EFTU"/>
    <property type="match status" value="1"/>
</dbReference>
<dbReference type="Pfam" id="PF03144">
    <property type="entry name" value="GTP_EFTU_D2"/>
    <property type="match status" value="1"/>
</dbReference>
<dbReference type="Pfam" id="PF14578">
    <property type="entry name" value="GTP_EFTU_D4"/>
    <property type="match status" value="1"/>
</dbReference>
<dbReference type="PRINTS" id="PR00315">
    <property type="entry name" value="ELONGATNFCT"/>
</dbReference>
<dbReference type="SUPFAM" id="SSF50465">
    <property type="entry name" value="EF-Tu/eEF-1alpha/eIF2-gamma C-terminal domain"/>
    <property type="match status" value="1"/>
</dbReference>
<dbReference type="SUPFAM" id="SSF52540">
    <property type="entry name" value="P-loop containing nucleoside triphosphate hydrolases"/>
    <property type="match status" value="1"/>
</dbReference>
<dbReference type="SUPFAM" id="SSF50447">
    <property type="entry name" value="Translation proteins"/>
    <property type="match status" value="1"/>
</dbReference>
<dbReference type="PROSITE" id="PS00301">
    <property type="entry name" value="G_TR_1"/>
    <property type="match status" value="1"/>
</dbReference>
<dbReference type="PROSITE" id="PS51722">
    <property type="entry name" value="G_TR_2"/>
    <property type="match status" value="1"/>
</dbReference>
<name>EF1A_PYRAR</name>
<reference key="1">
    <citation type="submission" date="2007-04" db="EMBL/GenBank/DDBJ databases">
        <title>Complete sequence of Pyrobaculum arsenaticum DSM 13514.</title>
        <authorList>
            <consortium name="US DOE Joint Genome Institute"/>
            <person name="Copeland A."/>
            <person name="Lucas S."/>
            <person name="Lapidus A."/>
            <person name="Barry K."/>
            <person name="Glavina del Rio T."/>
            <person name="Dalin E."/>
            <person name="Tice H."/>
            <person name="Pitluck S."/>
            <person name="Chain P."/>
            <person name="Malfatti S."/>
            <person name="Shin M."/>
            <person name="Vergez L."/>
            <person name="Schmutz J."/>
            <person name="Larimer F."/>
            <person name="Land M."/>
            <person name="Hauser L."/>
            <person name="Kyrpides N."/>
            <person name="Mikhailova N."/>
            <person name="Cozen A.E."/>
            <person name="Fitz-Gibbon S.T."/>
            <person name="House C.H."/>
            <person name="Saltikov C."/>
            <person name="Lowe T.M."/>
            <person name="Richardson P."/>
        </authorList>
    </citation>
    <scope>NUCLEOTIDE SEQUENCE [LARGE SCALE GENOMIC DNA]</scope>
    <source>
        <strain>ATCC 700994 / DSM 13514 / JCM 11321 / PZ6</strain>
    </source>
</reference>
<proteinExistence type="inferred from homology"/>
<accession>A4WKK8</accession>
<feature type="chain" id="PRO_0000337609" description="Elongation factor 1-alpha">
    <location>
        <begin position="1"/>
        <end position="444"/>
    </location>
</feature>
<feature type="domain" description="tr-type G">
    <location>
        <begin position="15"/>
        <end position="236"/>
    </location>
</feature>
<feature type="region of interest" description="G1" evidence="1">
    <location>
        <begin position="24"/>
        <end position="31"/>
    </location>
</feature>
<feature type="region of interest" description="G2" evidence="1">
    <location>
        <begin position="80"/>
        <end position="84"/>
    </location>
</feature>
<feature type="region of interest" description="G3" evidence="1">
    <location>
        <begin position="101"/>
        <end position="104"/>
    </location>
</feature>
<feature type="region of interest" description="G4" evidence="1">
    <location>
        <begin position="163"/>
        <end position="166"/>
    </location>
</feature>
<feature type="region of interest" description="G5" evidence="1">
    <location>
        <begin position="202"/>
        <end position="204"/>
    </location>
</feature>
<feature type="binding site" evidence="2">
    <location>
        <begin position="24"/>
        <end position="31"/>
    </location>
    <ligand>
        <name>GTP</name>
        <dbReference type="ChEBI" id="CHEBI:37565"/>
    </ligand>
</feature>
<feature type="binding site" evidence="2">
    <location>
        <position position="31"/>
    </location>
    <ligand>
        <name>Mg(2+)</name>
        <dbReference type="ChEBI" id="CHEBI:18420"/>
    </ligand>
</feature>
<feature type="binding site" evidence="2">
    <location>
        <begin position="101"/>
        <end position="105"/>
    </location>
    <ligand>
        <name>GTP</name>
        <dbReference type="ChEBI" id="CHEBI:37565"/>
    </ligand>
</feature>
<feature type="binding site" evidence="2">
    <location>
        <begin position="163"/>
        <end position="166"/>
    </location>
    <ligand>
        <name>GTP</name>
        <dbReference type="ChEBI" id="CHEBI:37565"/>
    </ligand>
</feature>
<comment type="function">
    <text evidence="2">GTP hydrolase that promotes the GTP-dependent binding of aminoacyl-tRNA to the A-site of ribosomes during protein biosynthesis.</text>
</comment>
<comment type="catalytic activity">
    <reaction evidence="2">
        <text>GTP + H2O = GDP + phosphate + H(+)</text>
        <dbReference type="Rhea" id="RHEA:19669"/>
        <dbReference type="ChEBI" id="CHEBI:15377"/>
        <dbReference type="ChEBI" id="CHEBI:15378"/>
        <dbReference type="ChEBI" id="CHEBI:37565"/>
        <dbReference type="ChEBI" id="CHEBI:43474"/>
        <dbReference type="ChEBI" id="CHEBI:58189"/>
        <dbReference type="EC" id="3.6.5.3"/>
    </reaction>
    <physiologicalReaction direction="left-to-right" evidence="2">
        <dbReference type="Rhea" id="RHEA:19670"/>
    </physiologicalReaction>
</comment>
<comment type="subcellular location">
    <subcellularLocation>
        <location evidence="2">Cytoplasm</location>
    </subcellularLocation>
</comment>
<comment type="similarity">
    <text evidence="2">Belongs to the TRAFAC class translation factor GTPase superfamily. Classic translation factor GTPase family. EF-Tu/EF-1A subfamily.</text>
</comment>
<organism>
    <name type="scientific">Pyrobaculum arsenaticum (strain DSM 13514 / JCM 11321 / PZ6)</name>
    <dbReference type="NCBI Taxonomy" id="340102"/>
    <lineage>
        <taxon>Archaea</taxon>
        <taxon>Thermoproteota</taxon>
        <taxon>Thermoprotei</taxon>
        <taxon>Thermoproteales</taxon>
        <taxon>Thermoproteaceae</taxon>
        <taxon>Pyrobaculum</taxon>
    </lineage>
</organism>
<evidence type="ECO:0000250" key="1"/>
<evidence type="ECO:0000255" key="2">
    <source>
        <dbReference type="HAMAP-Rule" id="MF_00118"/>
    </source>
</evidence>